<protein>
    <recommendedName>
        <fullName>Neutral phospholipase A2 paradoxin-like beta chain</fullName>
        <shortName>svPLA2</shortName>
    </recommendedName>
    <alternativeName>
        <fullName>Beta paradoxin-like</fullName>
    </alternativeName>
</protein>
<evidence type="ECO:0000250" key="1"/>
<evidence type="ECO:0000255" key="2"/>
<evidence type="ECO:0000269" key="3">
    <source>
    </source>
</evidence>
<evidence type="ECO:0000305" key="4"/>
<accession>Q45Z46</accession>
<feature type="signal peptide" evidence="2">
    <location>
        <begin position="1"/>
        <end position="27"/>
    </location>
</feature>
<feature type="chain" id="PRO_0000420853" description="Neutral phospholipase A2 paradoxin-like beta chain">
    <location>
        <begin position="28"/>
        <end position="145"/>
    </location>
</feature>
<feature type="disulfide bond" evidence="1">
    <location>
        <begin position="38"/>
        <end position="98"/>
    </location>
</feature>
<feature type="disulfide bond" evidence="1">
    <location>
        <begin position="54"/>
        <end position="144"/>
    </location>
</feature>
<feature type="disulfide bond" evidence="1">
    <location>
        <begin position="56"/>
        <end position="72"/>
    </location>
</feature>
<feature type="disulfide bond" evidence="1">
    <location>
        <begin position="71"/>
        <end position="125"/>
    </location>
</feature>
<feature type="disulfide bond" evidence="1">
    <location>
        <begin position="78"/>
        <end position="118"/>
    </location>
</feature>
<feature type="disulfide bond" evidence="1">
    <location>
        <begin position="87"/>
        <end position="111"/>
    </location>
</feature>
<feature type="disulfide bond" evidence="1">
    <location>
        <begin position="105"/>
        <end position="116"/>
    </location>
</feature>
<sequence length="145" mass="16105">MHPAHLLVLLAVCVSLLGASDIPPLPLNLLQFGFMIECAIRNRQPALDFMNYGCYCGTVGHGTPVDDLDRCCKTRNECYAEAEKHGCYPSLTTYRWQCGRVGLHCNSKTQCEVFVCACDLAAAKCLAQEDYNPAHFNINTKARCR</sequence>
<comment type="function">
    <text evidence="1 3">Heterotrimer: Snake venom phospholipase A2 (PLA2) heterotrimer that acts as a potent presynaptic neurotoxin by blocking synaptic transmission and synaptic vesicle recycling (PubMed:17313963). May act by binding in a calcium-dependent fashion to neurotonal pentraxin-1 (NPTX1) and neurotonal pentraxin-2 (NPTX2), but not to neuronal pentraxin receptor (NPTXR). Also binds to taipoxin-associated calcium binding protein 49 (RCN2), a protein localized in the lumen of endoplasmic reticulum (By similarity).</text>
</comment>
<comment type="function">
    <text evidence="1">Monomer (beta chain): Snake venom phospholipase A2 homolog that is neither toxic nor enzymatically active. Does not bind calcium (By similarity).</text>
</comment>
<comment type="subunit">
    <text evidence="3">Heterotrimer of alpha, beta, and gamma chains; non-covalently linked.</text>
</comment>
<comment type="subcellular location">
    <subcellularLocation>
        <location>Secreted</location>
    </subcellularLocation>
</comment>
<comment type="tissue specificity">
    <text>Expressed by the venom gland.</text>
</comment>
<comment type="similarity">
    <text evidence="4">Belongs to the phospholipase A2 family. Group I subfamily. N49 sub-subfamily.</text>
</comment>
<comment type="caution">
    <text evidence="4">The assignment of paradoxin function to this sequence has been made based on sequence similarity to taipoxin and cannitoxin. The gamma chain has not yet been sequenced.</text>
</comment>
<proteinExistence type="evidence at protein level"/>
<keyword id="KW-1015">Disulfide bond</keyword>
<keyword id="KW-0964">Secreted</keyword>
<keyword id="KW-0732">Signal</keyword>
<name>PA2HB_OXYMI</name>
<organism>
    <name type="scientific">Oxyuranus microlepidotus</name>
    <name type="common">Inland taipan</name>
    <name type="synonym">Diemenia microlepidota</name>
    <dbReference type="NCBI Taxonomy" id="111177"/>
    <lineage>
        <taxon>Eukaryota</taxon>
        <taxon>Metazoa</taxon>
        <taxon>Chordata</taxon>
        <taxon>Craniata</taxon>
        <taxon>Vertebrata</taxon>
        <taxon>Euteleostomi</taxon>
        <taxon>Lepidosauria</taxon>
        <taxon>Squamata</taxon>
        <taxon>Bifurcata</taxon>
        <taxon>Unidentata</taxon>
        <taxon>Episquamata</taxon>
        <taxon>Toxicofera</taxon>
        <taxon>Serpentes</taxon>
        <taxon>Colubroidea</taxon>
        <taxon>Elapidae</taxon>
        <taxon>Hydrophiinae</taxon>
        <taxon>Oxyuranus</taxon>
    </lineage>
</organism>
<dbReference type="EMBL" id="DQ085820">
    <property type="protein sequence ID" value="AAZ22638.1"/>
    <property type="molecule type" value="mRNA"/>
</dbReference>
<dbReference type="SMR" id="Q45Z46"/>
<dbReference type="GO" id="GO:0005576">
    <property type="term" value="C:extracellular region"/>
    <property type="evidence" value="ECO:0007669"/>
    <property type="project" value="UniProtKB-SubCell"/>
</dbReference>
<dbReference type="GO" id="GO:0005509">
    <property type="term" value="F:calcium ion binding"/>
    <property type="evidence" value="ECO:0007669"/>
    <property type="project" value="InterPro"/>
</dbReference>
<dbReference type="GO" id="GO:0047498">
    <property type="term" value="F:calcium-dependent phospholipase A2 activity"/>
    <property type="evidence" value="ECO:0007669"/>
    <property type="project" value="TreeGrafter"/>
</dbReference>
<dbReference type="GO" id="GO:0005543">
    <property type="term" value="F:phospholipid binding"/>
    <property type="evidence" value="ECO:0007669"/>
    <property type="project" value="TreeGrafter"/>
</dbReference>
<dbReference type="GO" id="GO:0050482">
    <property type="term" value="P:arachidonate secretion"/>
    <property type="evidence" value="ECO:0007669"/>
    <property type="project" value="InterPro"/>
</dbReference>
<dbReference type="GO" id="GO:0016042">
    <property type="term" value="P:lipid catabolic process"/>
    <property type="evidence" value="ECO:0007669"/>
    <property type="project" value="InterPro"/>
</dbReference>
<dbReference type="GO" id="GO:0006644">
    <property type="term" value="P:phospholipid metabolic process"/>
    <property type="evidence" value="ECO:0007669"/>
    <property type="project" value="InterPro"/>
</dbReference>
<dbReference type="CDD" id="cd00125">
    <property type="entry name" value="PLA2c"/>
    <property type="match status" value="1"/>
</dbReference>
<dbReference type="FunFam" id="1.20.90.10:FF:000007">
    <property type="entry name" value="Acidic phospholipase A2"/>
    <property type="match status" value="1"/>
</dbReference>
<dbReference type="Gene3D" id="1.20.90.10">
    <property type="entry name" value="Phospholipase A2 domain"/>
    <property type="match status" value="1"/>
</dbReference>
<dbReference type="InterPro" id="IPR001211">
    <property type="entry name" value="PLipase_A2"/>
</dbReference>
<dbReference type="InterPro" id="IPR033112">
    <property type="entry name" value="PLipase_A2_Asp_AS"/>
</dbReference>
<dbReference type="InterPro" id="IPR016090">
    <property type="entry name" value="PLipase_A2_dom"/>
</dbReference>
<dbReference type="InterPro" id="IPR036444">
    <property type="entry name" value="PLipase_A2_dom_sf"/>
</dbReference>
<dbReference type="PANTHER" id="PTHR11716:SF51">
    <property type="entry name" value="PHOSPHOLIPASE A2"/>
    <property type="match status" value="1"/>
</dbReference>
<dbReference type="PANTHER" id="PTHR11716">
    <property type="entry name" value="PHOSPHOLIPASE A2 FAMILY MEMBER"/>
    <property type="match status" value="1"/>
</dbReference>
<dbReference type="Pfam" id="PF00068">
    <property type="entry name" value="Phospholip_A2_1"/>
    <property type="match status" value="1"/>
</dbReference>
<dbReference type="PRINTS" id="PR00389">
    <property type="entry name" value="PHPHLIPASEA2"/>
</dbReference>
<dbReference type="SMART" id="SM00085">
    <property type="entry name" value="PA2c"/>
    <property type="match status" value="1"/>
</dbReference>
<dbReference type="SUPFAM" id="SSF48619">
    <property type="entry name" value="Phospholipase A2, PLA2"/>
    <property type="match status" value="1"/>
</dbReference>
<dbReference type="PROSITE" id="PS00119">
    <property type="entry name" value="PA2_ASP"/>
    <property type="match status" value="1"/>
</dbReference>
<reference key="1">
    <citation type="journal article" date="2005" name="Cell. Mol. Life Sci.">
        <title>Identification and analysis of venom gland-specific genes from the coastal taipan (Oxyuranus scutellatus) and related species.</title>
        <authorList>
            <person name="St Pierre L."/>
            <person name="Woods R."/>
            <person name="Earl S.T.H."/>
            <person name="Masci P.P."/>
            <person name="Lavin M.F."/>
        </authorList>
    </citation>
    <scope>NUCLEOTIDE SEQUENCE [MRNA]</scope>
    <source>
        <tissue>Venom gland</tissue>
    </source>
</reference>
<reference key="2">
    <citation type="journal article" date="2007" name="Neuropharmacology">
        <title>The neuromuscular activity of paradoxin: a presynaptic neurotoxin from the venom of the inland taipan (Oxyuranus microlepidotus).</title>
        <authorList>
            <person name="Hodgson W.C."/>
            <person name="Dal Belo C.A."/>
            <person name="Rowan E.G."/>
        </authorList>
    </citation>
    <scope>FUNCTION</scope>
    <scope>SUBUNIT</scope>
</reference>